<feature type="chain" id="PRO_0000298242" description="Ion-translocating oxidoreductase complex subunit D">
    <location>
        <begin position="1"/>
        <end position="352"/>
    </location>
</feature>
<feature type="transmembrane region" description="Helical" evidence="1">
    <location>
        <begin position="20"/>
        <end position="40"/>
    </location>
</feature>
<feature type="transmembrane region" description="Helical" evidence="1">
    <location>
        <begin position="42"/>
        <end position="62"/>
    </location>
</feature>
<feature type="transmembrane region" description="Helical" evidence="1">
    <location>
        <begin position="89"/>
        <end position="109"/>
    </location>
</feature>
<feature type="transmembrane region" description="Helical" evidence="1">
    <location>
        <begin position="123"/>
        <end position="143"/>
    </location>
</feature>
<feature type="transmembrane region" description="Helical" evidence="1">
    <location>
        <begin position="214"/>
        <end position="234"/>
    </location>
</feature>
<feature type="transmembrane region" description="Helical" evidence="1">
    <location>
        <begin position="242"/>
        <end position="262"/>
    </location>
</feature>
<feature type="transmembrane region" description="Helical" evidence="1">
    <location>
        <begin position="267"/>
        <end position="287"/>
    </location>
</feature>
<feature type="transmembrane region" description="Helical" evidence="1">
    <location>
        <begin position="301"/>
        <end position="321"/>
    </location>
</feature>
<feature type="transmembrane region" description="Helical" evidence="1">
    <location>
        <begin position="322"/>
        <end position="342"/>
    </location>
</feature>
<feature type="modified residue" description="FMN phosphoryl threonine" evidence="1">
    <location>
        <position position="187"/>
    </location>
</feature>
<name>RSXD_SHISS</name>
<sequence length="352" mass="38154">MVFRIASSPYTHNQRQTSRIMLLVLLAAVPGIAAQLWFFGWGTLVQILLASVSTLLAEALVLKLRKQSVAATLKDNSALLTGLLLAVSIPPLAPWWMVVLGTVFAVIIAKQLYGGLGQNPFNPAMIGYVVLLISFPVQMTSWLPPHEIAVNIPGFIDAIQVIFSGHTASGGDMNTLRLGIDGISQATPLDTFKTSVRAGHSVEQIMQYPIYSGILAGAGWQWVNLAWLAGGLWLLWQKAIRWHIPLSFLVTLALCATLGWLFSPETLAAPQIHLLSGATMLGAFFILTDPVTASTTNRGRLIFGALAGLLVWLIRSFGGYPDGVAFAVLLANITVPLIDYYTRPRVYGHRKG</sequence>
<proteinExistence type="inferred from homology"/>
<evidence type="ECO:0000255" key="1">
    <source>
        <dbReference type="HAMAP-Rule" id="MF_00462"/>
    </source>
</evidence>
<dbReference type="EC" id="7.-.-.-" evidence="1"/>
<dbReference type="EMBL" id="CP000038">
    <property type="protein sequence ID" value="AAZ88227.1"/>
    <property type="molecule type" value="Genomic_DNA"/>
</dbReference>
<dbReference type="RefSeq" id="WP_000231955.1">
    <property type="nucleotide sequence ID" value="NC_007384.1"/>
</dbReference>
<dbReference type="SMR" id="Q3Z1Y5"/>
<dbReference type="GeneID" id="93775782"/>
<dbReference type="KEGG" id="ssn:SSON_1528"/>
<dbReference type="HOGENOM" id="CLU_042020_0_0_6"/>
<dbReference type="Proteomes" id="UP000002529">
    <property type="component" value="Chromosome"/>
</dbReference>
<dbReference type="GO" id="GO:0005886">
    <property type="term" value="C:plasma membrane"/>
    <property type="evidence" value="ECO:0007669"/>
    <property type="project" value="UniProtKB-SubCell"/>
</dbReference>
<dbReference type="GO" id="GO:0022900">
    <property type="term" value="P:electron transport chain"/>
    <property type="evidence" value="ECO:0007669"/>
    <property type="project" value="UniProtKB-UniRule"/>
</dbReference>
<dbReference type="GO" id="GO:0055085">
    <property type="term" value="P:transmembrane transport"/>
    <property type="evidence" value="ECO:0007669"/>
    <property type="project" value="InterPro"/>
</dbReference>
<dbReference type="HAMAP" id="MF_00462">
    <property type="entry name" value="RsxD_RnfD"/>
    <property type="match status" value="1"/>
</dbReference>
<dbReference type="InterPro" id="IPR004338">
    <property type="entry name" value="NqrB/RnfD"/>
</dbReference>
<dbReference type="InterPro" id="IPR011303">
    <property type="entry name" value="RnfD_bac"/>
</dbReference>
<dbReference type="NCBIfam" id="NF002011">
    <property type="entry name" value="PRK00816.1"/>
    <property type="match status" value="1"/>
</dbReference>
<dbReference type="NCBIfam" id="TIGR01946">
    <property type="entry name" value="rnfD"/>
    <property type="match status" value="1"/>
</dbReference>
<dbReference type="PANTHER" id="PTHR30578">
    <property type="entry name" value="ELECTRON TRANSPORT COMPLEX PROTEIN RNFD"/>
    <property type="match status" value="1"/>
</dbReference>
<dbReference type="PANTHER" id="PTHR30578:SF0">
    <property type="entry name" value="ION-TRANSLOCATING OXIDOREDUCTASE COMPLEX SUBUNIT D"/>
    <property type="match status" value="1"/>
</dbReference>
<dbReference type="Pfam" id="PF03116">
    <property type="entry name" value="NQR2_RnfD_RnfE"/>
    <property type="match status" value="1"/>
</dbReference>
<accession>Q3Z1Y5</accession>
<keyword id="KW-0997">Cell inner membrane</keyword>
<keyword id="KW-1003">Cell membrane</keyword>
<keyword id="KW-0249">Electron transport</keyword>
<keyword id="KW-0285">Flavoprotein</keyword>
<keyword id="KW-0288">FMN</keyword>
<keyword id="KW-0472">Membrane</keyword>
<keyword id="KW-0597">Phosphoprotein</keyword>
<keyword id="KW-1185">Reference proteome</keyword>
<keyword id="KW-1278">Translocase</keyword>
<keyword id="KW-0812">Transmembrane</keyword>
<keyword id="KW-1133">Transmembrane helix</keyword>
<keyword id="KW-0813">Transport</keyword>
<comment type="function">
    <text evidence="1">Part of a membrane-bound complex that couples electron transfer with translocation of ions across the membrane. Required to maintain the reduced state of SoxR.</text>
</comment>
<comment type="cofactor">
    <cofactor evidence="1">
        <name>FMN</name>
        <dbReference type="ChEBI" id="CHEBI:58210"/>
    </cofactor>
</comment>
<comment type="subunit">
    <text evidence="1">The complex is composed of six subunits: RsxA, RsxB, RsxC, RsxD, RsxE and RsxG.</text>
</comment>
<comment type="subcellular location">
    <subcellularLocation>
        <location evidence="1">Cell inner membrane</location>
        <topology evidence="1">Multi-pass membrane protein</topology>
    </subcellularLocation>
</comment>
<comment type="similarity">
    <text evidence="1">Belongs to the NqrB/RnfD family.</text>
</comment>
<protein>
    <recommendedName>
        <fullName evidence="1">Ion-translocating oxidoreductase complex subunit D</fullName>
        <ecNumber evidence="1">7.-.-.-</ecNumber>
    </recommendedName>
    <alternativeName>
        <fullName evidence="1">Rsx electron transport complex subunit D</fullName>
    </alternativeName>
</protein>
<gene>
    <name evidence="1" type="primary">rsxD</name>
    <name type="ordered locus">SSON_1528</name>
</gene>
<reference key="1">
    <citation type="journal article" date="2005" name="Nucleic Acids Res.">
        <title>Genome dynamics and diversity of Shigella species, the etiologic agents of bacillary dysentery.</title>
        <authorList>
            <person name="Yang F."/>
            <person name="Yang J."/>
            <person name="Zhang X."/>
            <person name="Chen L."/>
            <person name="Jiang Y."/>
            <person name="Yan Y."/>
            <person name="Tang X."/>
            <person name="Wang J."/>
            <person name="Xiong Z."/>
            <person name="Dong J."/>
            <person name="Xue Y."/>
            <person name="Zhu Y."/>
            <person name="Xu X."/>
            <person name="Sun L."/>
            <person name="Chen S."/>
            <person name="Nie H."/>
            <person name="Peng J."/>
            <person name="Xu J."/>
            <person name="Wang Y."/>
            <person name="Yuan Z."/>
            <person name="Wen Y."/>
            <person name="Yao Z."/>
            <person name="Shen Y."/>
            <person name="Qiang B."/>
            <person name="Hou Y."/>
            <person name="Yu J."/>
            <person name="Jin Q."/>
        </authorList>
    </citation>
    <scope>NUCLEOTIDE SEQUENCE [LARGE SCALE GENOMIC DNA]</scope>
    <source>
        <strain>Ss046</strain>
    </source>
</reference>
<organism>
    <name type="scientific">Shigella sonnei (strain Ss046)</name>
    <dbReference type="NCBI Taxonomy" id="300269"/>
    <lineage>
        <taxon>Bacteria</taxon>
        <taxon>Pseudomonadati</taxon>
        <taxon>Pseudomonadota</taxon>
        <taxon>Gammaproteobacteria</taxon>
        <taxon>Enterobacterales</taxon>
        <taxon>Enterobacteriaceae</taxon>
        <taxon>Shigella</taxon>
    </lineage>
</organism>